<gene>
    <name type="primary">nat5</name>
    <name type="ORF">DDB_G0276345</name>
</gene>
<comment type="function">
    <text evidence="1">Seems to be involved in N-acetylation.</text>
</comment>
<comment type="similarity">
    <text evidence="3">Belongs to the acetyltransferase family. ARD1 subfamily.</text>
</comment>
<name>NAA20_DICDI</name>
<evidence type="ECO:0000250" key="1"/>
<evidence type="ECO:0000255" key="2">
    <source>
        <dbReference type="PROSITE-ProRule" id="PRU00532"/>
    </source>
</evidence>
<evidence type="ECO:0000305" key="3"/>
<accession>Q8SSN5</accession>
<accession>B0M0P9</accession>
<accession>Q551T5</accession>
<proteinExistence type="inferred from homology"/>
<dbReference type="EC" id="2.3.1.-"/>
<dbReference type="EMBL" id="AAFI02000014">
    <property type="protein sequence ID" value="EAL69253.2"/>
    <property type="molecule type" value="Genomic_DNA"/>
</dbReference>
<dbReference type="RefSeq" id="XP_643184.2">
    <property type="nucleotide sequence ID" value="XM_638092.2"/>
</dbReference>
<dbReference type="SMR" id="Q8SSN5"/>
<dbReference type="FunCoup" id="Q8SSN5">
    <property type="interactions" value="544"/>
</dbReference>
<dbReference type="STRING" id="44689.Q8SSN5"/>
<dbReference type="GlyGen" id="Q8SSN5">
    <property type="glycosylation" value="1 site"/>
</dbReference>
<dbReference type="PaxDb" id="44689-DDB0238097"/>
<dbReference type="EnsemblProtists" id="EAL69253">
    <property type="protein sequence ID" value="EAL69253"/>
    <property type="gene ID" value="DDB_G0276345"/>
</dbReference>
<dbReference type="GeneID" id="8620455"/>
<dbReference type="KEGG" id="ddi:DDB_G0276345"/>
<dbReference type="dictyBase" id="DDB_G0276345">
    <property type="gene designation" value="naa20"/>
</dbReference>
<dbReference type="VEuPathDB" id="AmoebaDB:DDB_G0276345"/>
<dbReference type="eggNOG" id="KOG3234">
    <property type="taxonomic scope" value="Eukaryota"/>
</dbReference>
<dbReference type="HOGENOM" id="CLU_013985_7_1_1"/>
<dbReference type="InParanoid" id="Q8SSN5"/>
<dbReference type="OMA" id="EQHPSMR"/>
<dbReference type="PhylomeDB" id="Q8SSN5"/>
<dbReference type="PRO" id="PR:Q8SSN5"/>
<dbReference type="Proteomes" id="UP000002195">
    <property type="component" value="Chromosome 2"/>
</dbReference>
<dbReference type="GO" id="GO:0005737">
    <property type="term" value="C:cytoplasm"/>
    <property type="evidence" value="ECO:0000250"/>
    <property type="project" value="dictyBase"/>
</dbReference>
<dbReference type="GO" id="GO:0031416">
    <property type="term" value="C:NatB complex"/>
    <property type="evidence" value="ECO:0000318"/>
    <property type="project" value="GO_Central"/>
</dbReference>
<dbReference type="GO" id="GO:0004596">
    <property type="term" value="F:protein-N-terminal amino-acid acetyltransferase activity"/>
    <property type="evidence" value="ECO:0000250"/>
    <property type="project" value="dictyBase"/>
</dbReference>
<dbReference type="GO" id="GO:0017196">
    <property type="term" value="P:N-terminal peptidyl-methionine acetylation"/>
    <property type="evidence" value="ECO:0000250"/>
    <property type="project" value="dictyBase"/>
</dbReference>
<dbReference type="GO" id="GO:0032956">
    <property type="term" value="P:regulation of actin cytoskeleton organization"/>
    <property type="evidence" value="ECO:0000318"/>
    <property type="project" value="GO_Central"/>
</dbReference>
<dbReference type="CDD" id="cd04301">
    <property type="entry name" value="NAT_SF"/>
    <property type="match status" value="1"/>
</dbReference>
<dbReference type="FunFam" id="3.40.630.30:FF:000034">
    <property type="entry name" value="N-alpha-acetyltransferase 20"/>
    <property type="match status" value="1"/>
</dbReference>
<dbReference type="Gene3D" id="3.40.630.30">
    <property type="match status" value="1"/>
</dbReference>
<dbReference type="InterPro" id="IPR016181">
    <property type="entry name" value="Acyl_CoA_acyltransferase"/>
</dbReference>
<dbReference type="InterPro" id="IPR000182">
    <property type="entry name" value="GNAT_dom"/>
</dbReference>
<dbReference type="InterPro" id="IPR051646">
    <property type="entry name" value="NatB_acetyltransferase_subunit"/>
</dbReference>
<dbReference type="PANTHER" id="PTHR45910">
    <property type="entry name" value="N-ALPHA-ACETYLTRANSFERASE 20"/>
    <property type="match status" value="1"/>
</dbReference>
<dbReference type="PANTHER" id="PTHR45910:SF1">
    <property type="entry name" value="N-ALPHA-ACETYLTRANSFERASE 20"/>
    <property type="match status" value="1"/>
</dbReference>
<dbReference type="Pfam" id="PF00583">
    <property type="entry name" value="Acetyltransf_1"/>
    <property type="match status" value="1"/>
</dbReference>
<dbReference type="SUPFAM" id="SSF55729">
    <property type="entry name" value="Acyl-CoA N-acyltransferases (Nat)"/>
    <property type="match status" value="1"/>
</dbReference>
<dbReference type="PROSITE" id="PS51186">
    <property type="entry name" value="GNAT"/>
    <property type="match status" value="1"/>
</dbReference>
<feature type="chain" id="PRO_0000327578" description="N-alpha-acetyltransferase 20">
    <location>
        <begin position="1"/>
        <end position="173"/>
    </location>
</feature>
<feature type="domain" description="N-acetyltransferase" evidence="2">
    <location>
        <begin position="2"/>
        <end position="151"/>
    </location>
</feature>
<sequence length="173" mass="20006">MTTIRRFVCDDLFKFNNINLDYLTETYYLPFYLQYLSKWPSLLSMAEDVNGKPMGYMIGKAEGEGINWHGHVTAVSVAPEFRRIGLADRLMHILEEGSEKIYDGYFVDLFVRKSNTLAINMYTKFGYSVYRTVIGYYSGDEDALDMRKALPRDVEKKSIIPLKHPVYPTDADL</sequence>
<reference key="1">
    <citation type="journal article" date="2002" name="Nature">
        <title>Sequence and analysis of chromosome 2 of Dictyostelium discoideum.</title>
        <authorList>
            <person name="Gloeckner G."/>
            <person name="Eichinger L."/>
            <person name="Szafranski K."/>
            <person name="Pachebat J.A."/>
            <person name="Bankier A.T."/>
            <person name="Dear P.H."/>
            <person name="Lehmann R."/>
            <person name="Baumgart C."/>
            <person name="Parra G."/>
            <person name="Abril J.F."/>
            <person name="Guigo R."/>
            <person name="Kumpf K."/>
            <person name="Tunggal B."/>
            <person name="Cox E.C."/>
            <person name="Quail M.A."/>
            <person name="Platzer M."/>
            <person name="Rosenthal A."/>
            <person name="Noegel A.A."/>
        </authorList>
    </citation>
    <scope>NUCLEOTIDE SEQUENCE [LARGE SCALE GENOMIC DNA]</scope>
    <source>
        <strain>AX4</strain>
    </source>
</reference>
<reference key="2">
    <citation type="journal article" date="2005" name="Nature">
        <title>The genome of the social amoeba Dictyostelium discoideum.</title>
        <authorList>
            <person name="Eichinger L."/>
            <person name="Pachebat J.A."/>
            <person name="Gloeckner G."/>
            <person name="Rajandream M.A."/>
            <person name="Sucgang R."/>
            <person name="Berriman M."/>
            <person name="Song J."/>
            <person name="Olsen R."/>
            <person name="Szafranski K."/>
            <person name="Xu Q."/>
            <person name="Tunggal B."/>
            <person name="Kummerfeld S."/>
            <person name="Madera M."/>
            <person name="Konfortov B.A."/>
            <person name="Rivero F."/>
            <person name="Bankier A.T."/>
            <person name="Lehmann R."/>
            <person name="Hamlin N."/>
            <person name="Davies R."/>
            <person name="Gaudet P."/>
            <person name="Fey P."/>
            <person name="Pilcher K."/>
            <person name="Chen G."/>
            <person name="Saunders D."/>
            <person name="Sodergren E.J."/>
            <person name="Davis P."/>
            <person name="Kerhornou A."/>
            <person name="Nie X."/>
            <person name="Hall N."/>
            <person name="Anjard C."/>
            <person name="Hemphill L."/>
            <person name="Bason N."/>
            <person name="Farbrother P."/>
            <person name="Desany B."/>
            <person name="Just E."/>
            <person name="Morio T."/>
            <person name="Rost R."/>
            <person name="Churcher C.M."/>
            <person name="Cooper J."/>
            <person name="Haydock S."/>
            <person name="van Driessche N."/>
            <person name="Cronin A."/>
            <person name="Goodhead I."/>
            <person name="Muzny D.M."/>
            <person name="Mourier T."/>
            <person name="Pain A."/>
            <person name="Lu M."/>
            <person name="Harper D."/>
            <person name="Lindsay R."/>
            <person name="Hauser H."/>
            <person name="James K.D."/>
            <person name="Quiles M."/>
            <person name="Madan Babu M."/>
            <person name="Saito T."/>
            <person name="Buchrieser C."/>
            <person name="Wardroper A."/>
            <person name="Felder M."/>
            <person name="Thangavelu M."/>
            <person name="Johnson D."/>
            <person name="Knights A."/>
            <person name="Loulseged H."/>
            <person name="Mungall K.L."/>
            <person name="Oliver K."/>
            <person name="Price C."/>
            <person name="Quail M.A."/>
            <person name="Urushihara H."/>
            <person name="Hernandez J."/>
            <person name="Rabbinowitsch E."/>
            <person name="Steffen D."/>
            <person name="Sanders M."/>
            <person name="Ma J."/>
            <person name="Kohara Y."/>
            <person name="Sharp S."/>
            <person name="Simmonds M.N."/>
            <person name="Spiegler S."/>
            <person name="Tivey A."/>
            <person name="Sugano S."/>
            <person name="White B."/>
            <person name="Walker D."/>
            <person name="Woodward J.R."/>
            <person name="Winckler T."/>
            <person name="Tanaka Y."/>
            <person name="Shaulsky G."/>
            <person name="Schleicher M."/>
            <person name="Weinstock G.M."/>
            <person name="Rosenthal A."/>
            <person name="Cox E.C."/>
            <person name="Chisholm R.L."/>
            <person name="Gibbs R.A."/>
            <person name="Loomis W.F."/>
            <person name="Platzer M."/>
            <person name="Kay R.R."/>
            <person name="Williams J.G."/>
            <person name="Dear P.H."/>
            <person name="Noegel A.A."/>
            <person name="Barrell B.G."/>
            <person name="Kuspa A."/>
        </authorList>
    </citation>
    <scope>NUCLEOTIDE SEQUENCE [LARGE SCALE GENOMIC DNA]</scope>
    <source>
        <strain>AX4</strain>
    </source>
</reference>
<organism>
    <name type="scientific">Dictyostelium discoideum</name>
    <name type="common">Social amoeba</name>
    <dbReference type="NCBI Taxonomy" id="44689"/>
    <lineage>
        <taxon>Eukaryota</taxon>
        <taxon>Amoebozoa</taxon>
        <taxon>Evosea</taxon>
        <taxon>Eumycetozoa</taxon>
        <taxon>Dictyostelia</taxon>
        <taxon>Dictyosteliales</taxon>
        <taxon>Dictyosteliaceae</taxon>
        <taxon>Dictyostelium</taxon>
    </lineage>
</organism>
<protein>
    <recommendedName>
        <fullName>N-alpha-acetyltransferase 20</fullName>
        <ecNumber>2.3.1.-</ecNumber>
    </recommendedName>
    <alternativeName>
        <fullName>N-acetyltransferase 5 homolog</fullName>
    </alternativeName>
    <alternativeName>
        <fullName>N-terminal acetyltransferase B complex catalytic subunit NAA20 homolog</fullName>
    </alternativeName>
    <alternativeName>
        <fullName>NatB catalytic subunit</fullName>
    </alternativeName>
</protein>
<keyword id="KW-0012">Acyltransferase</keyword>
<keyword id="KW-1185">Reference proteome</keyword>
<keyword id="KW-0808">Transferase</keyword>